<name>AROA_PELPB</name>
<reference key="1">
    <citation type="submission" date="2008-06" db="EMBL/GenBank/DDBJ databases">
        <title>Complete sequence of Pelodictyon phaeoclathratiforme BU-1.</title>
        <authorList>
            <consortium name="US DOE Joint Genome Institute"/>
            <person name="Lucas S."/>
            <person name="Copeland A."/>
            <person name="Lapidus A."/>
            <person name="Glavina del Rio T."/>
            <person name="Dalin E."/>
            <person name="Tice H."/>
            <person name="Bruce D."/>
            <person name="Goodwin L."/>
            <person name="Pitluck S."/>
            <person name="Schmutz J."/>
            <person name="Larimer F."/>
            <person name="Land M."/>
            <person name="Hauser L."/>
            <person name="Kyrpides N."/>
            <person name="Mikhailova N."/>
            <person name="Liu Z."/>
            <person name="Li T."/>
            <person name="Zhao F."/>
            <person name="Overmann J."/>
            <person name="Bryant D.A."/>
            <person name="Richardson P."/>
        </authorList>
    </citation>
    <scope>NUCLEOTIDE SEQUENCE [LARGE SCALE GENOMIC DNA]</scope>
    <source>
        <strain>DSM 5477 / BU-1</strain>
    </source>
</reference>
<sequence>MRVFKGEVTALPPDKSISHRAALIGALSEGTTEIMNFSGGFDNQSTLGVLKDAGITLRQELLEGADGRTVRQVIIESKGLWSFQPPSAPLMCNNSGSTMRMFAGILAAQPFASELIGDSSLMKRPMKRVADPLRQMGADLQLSPSGTAPICIKGSKELKPINYRLPVPSAQVKSLVAFAALHADGESRIIESVRSRDHTEVMLGLDSFEQDGERVIVVPGRKTVAAKPFYIPADPSAACFIVALGLLARGSEIIIRDVCLNPTRAAFLNILTDAGACLTIENQRVIGGETIGDILVENHAALEPLLITDPQLVAFIIDEIPMLAVLSAFASGRFELHNAAELRTKESDRIDALVVNLQRLGFDCEQYPDGFVVKGRRITPSGTVVIDSFDDHRIAMSFAIAGKATGCPIDLSDIDVVGVSFPNFFDLLDSLQV</sequence>
<gene>
    <name evidence="1" type="primary">aroA</name>
    <name type="ordered locus">Ppha_2550</name>
</gene>
<comment type="function">
    <text evidence="1">Catalyzes the transfer of the enolpyruvyl moiety of phosphoenolpyruvate (PEP) to the 5-hydroxyl of shikimate-3-phosphate (S3P) to produce enolpyruvyl shikimate-3-phosphate and inorganic phosphate.</text>
</comment>
<comment type="catalytic activity">
    <reaction evidence="1">
        <text>3-phosphoshikimate + phosphoenolpyruvate = 5-O-(1-carboxyvinyl)-3-phosphoshikimate + phosphate</text>
        <dbReference type="Rhea" id="RHEA:21256"/>
        <dbReference type="ChEBI" id="CHEBI:43474"/>
        <dbReference type="ChEBI" id="CHEBI:57701"/>
        <dbReference type="ChEBI" id="CHEBI:58702"/>
        <dbReference type="ChEBI" id="CHEBI:145989"/>
        <dbReference type="EC" id="2.5.1.19"/>
    </reaction>
    <physiologicalReaction direction="left-to-right" evidence="1">
        <dbReference type="Rhea" id="RHEA:21257"/>
    </physiologicalReaction>
</comment>
<comment type="pathway">
    <text evidence="1">Metabolic intermediate biosynthesis; chorismate biosynthesis; chorismate from D-erythrose 4-phosphate and phosphoenolpyruvate: step 6/7.</text>
</comment>
<comment type="subunit">
    <text evidence="1">Monomer.</text>
</comment>
<comment type="subcellular location">
    <subcellularLocation>
        <location evidence="1">Cytoplasm</location>
    </subcellularLocation>
</comment>
<comment type="similarity">
    <text evidence="1">Belongs to the EPSP synthase family.</text>
</comment>
<dbReference type="EC" id="2.5.1.19" evidence="1"/>
<dbReference type="EMBL" id="CP001110">
    <property type="protein sequence ID" value="ACF44712.1"/>
    <property type="molecule type" value="Genomic_DNA"/>
</dbReference>
<dbReference type="RefSeq" id="WP_012509185.1">
    <property type="nucleotide sequence ID" value="NC_011060.1"/>
</dbReference>
<dbReference type="SMR" id="B4SFD3"/>
<dbReference type="STRING" id="324925.Ppha_2550"/>
<dbReference type="KEGG" id="pph:Ppha_2550"/>
<dbReference type="eggNOG" id="COG0128">
    <property type="taxonomic scope" value="Bacteria"/>
</dbReference>
<dbReference type="HOGENOM" id="CLU_024321_0_1_10"/>
<dbReference type="OrthoDB" id="9809920at2"/>
<dbReference type="UniPathway" id="UPA00053">
    <property type="reaction ID" value="UER00089"/>
</dbReference>
<dbReference type="Proteomes" id="UP000002724">
    <property type="component" value="Chromosome"/>
</dbReference>
<dbReference type="GO" id="GO:0005737">
    <property type="term" value="C:cytoplasm"/>
    <property type="evidence" value="ECO:0007669"/>
    <property type="project" value="UniProtKB-SubCell"/>
</dbReference>
<dbReference type="GO" id="GO:0003866">
    <property type="term" value="F:3-phosphoshikimate 1-carboxyvinyltransferase activity"/>
    <property type="evidence" value="ECO:0007669"/>
    <property type="project" value="UniProtKB-UniRule"/>
</dbReference>
<dbReference type="GO" id="GO:0008652">
    <property type="term" value="P:amino acid biosynthetic process"/>
    <property type="evidence" value="ECO:0007669"/>
    <property type="project" value="UniProtKB-KW"/>
</dbReference>
<dbReference type="GO" id="GO:0009073">
    <property type="term" value="P:aromatic amino acid family biosynthetic process"/>
    <property type="evidence" value="ECO:0007669"/>
    <property type="project" value="UniProtKB-KW"/>
</dbReference>
<dbReference type="GO" id="GO:0009423">
    <property type="term" value="P:chorismate biosynthetic process"/>
    <property type="evidence" value="ECO:0007669"/>
    <property type="project" value="UniProtKB-UniRule"/>
</dbReference>
<dbReference type="CDD" id="cd01556">
    <property type="entry name" value="EPSP_synthase"/>
    <property type="match status" value="1"/>
</dbReference>
<dbReference type="FunFam" id="3.65.10.10:FF:000005">
    <property type="entry name" value="3-phosphoshikimate 1-carboxyvinyltransferase"/>
    <property type="match status" value="1"/>
</dbReference>
<dbReference type="Gene3D" id="3.65.10.10">
    <property type="entry name" value="Enolpyruvate transferase domain"/>
    <property type="match status" value="2"/>
</dbReference>
<dbReference type="HAMAP" id="MF_00210">
    <property type="entry name" value="EPSP_synth"/>
    <property type="match status" value="1"/>
</dbReference>
<dbReference type="InterPro" id="IPR001986">
    <property type="entry name" value="Enolpyruvate_Tfrase_dom"/>
</dbReference>
<dbReference type="InterPro" id="IPR036968">
    <property type="entry name" value="Enolpyruvate_Tfrase_sf"/>
</dbReference>
<dbReference type="InterPro" id="IPR006264">
    <property type="entry name" value="EPSP_synthase"/>
</dbReference>
<dbReference type="InterPro" id="IPR023193">
    <property type="entry name" value="EPSP_synthase_CS"/>
</dbReference>
<dbReference type="InterPro" id="IPR013792">
    <property type="entry name" value="RNA3'P_cycl/enolpyr_Trfase_a/b"/>
</dbReference>
<dbReference type="NCBIfam" id="TIGR01356">
    <property type="entry name" value="aroA"/>
    <property type="match status" value="1"/>
</dbReference>
<dbReference type="PANTHER" id="PTHR21090">
    <property type="entry name" value="AROM/DEHYDROQUINATE SYNTHASE"/>
    <property type="match status" value="1"/>
</dbReference>
<dbReference type="PANTHER" id="PTHR21090:SF5">
    <property type="entry name" value="PENTAFUNCTIONAL AROM POLYPEPTIDE"/>
    <property type="match status" value="1"/>
</dbReference>
<dbReference type="Pfam" id="PF00275">
    <property type="entry name" value="EPSP_synthase"/>
    <property type="match status" value="1"/>
</dbReference>
<dbReference type="PIRSF" id="PIRSF000505">
    <property type="entry name" value="EPSPS"/>
    <property type="match status" value="1"/>
</dbReference>
<dbReference type="SUPFAM" id="SSF55205">
    <property type="entry name" value="EPT/RTPC-like"/>
    <property type="match status" value="1"/>
</dbReference>
<dbReference type="PROSITE" id="PS00885">
    <property type="entry name" value="EPSP_SYNTHASE_2"/>
    <property type="match status" value="1"/>
</dbReference>
<feature type="chain" id="PRO_1000099737" description="3-phosphoshikimate 1-carboxyvinyltransferase">
    <location>
        <begin position="1"/>
        <end position="433"/>
    </location>
</feature>
<feature type="active site" description="Proton acceptor" evidence="1">
    <location>
        <position position="318"/>
    </location>
</feature>
<feature type="binding site" evidence="1">
    <location>
        <position position="15"/>
    </location>
    <ligand>
        <name>3-phosphoshikimate</name>
        <dbReference type="ChEBI" id="CHEBI:145989"/>
    </ligand>
</feature>
<feature type="binding site" evidence="1">
    <location>
        <position position="15"/>
    </location>
    <ligand>
        <name>phosphoenolpyruvate</name>
        <dbReference type="ChEBI" id="CHEBI:58702"/>
    </ligand>
</feature>
<feature type="binding site" evidence="1">
    <location>
        <position position="16"/>
    </location>
    <ligand>
        <name>3-phosphoshikimate</name>
        <dbReference type="ChEBI" id="CHEBI:145989"/>
    </ligand>
</feature>
<feature type="binding site" evidence="1">
    <location>
        <position position="20"/>
    </location>
    <ligand>
        <name>3-phosphoshikimate</name>
        <dbReference type="ChEBI" id="CHEBI:145989"/>
    </ligand>
</feature>
<feature type="binding site" evidence="1">
    <location>
        <position position="96"/>
    </location>
    <ligand>
        <name>phosphoenolpyruvate</name>
        <dbReference type="ChEBI" id="CHEBI:58702"/>
    </ligand>
</feature>
<feature type="binding site" evidence="1">
    <location>
        <position position="124"/>
    </location>
    <ligand>
        <name>phosphoenolpyruvate</name>
        <dbReference type="ChEBI" id="CHEBI:58702"/>
    </ligand>
</feature>
<feature type="binding site" evidence="1">
    <location>
        <position position="169"/>
    </location>
    <ligand>
        <name>3-phosphoshikimate</name>
        <dbReference type="ChEBI" id="CHEBI:145989"/>
    </ligand>
</feature>
<feature type="binding site" evidence="1">
    <location>
        <position position="171"/>
    </location>
    <ligand>
        <name>3-phosphoshikimate</name>
        <dbReference type="ChEBI" id="CHEBI:145989"/>
    </ligand>
</feature>
<feature type="binding site" evidence="1">
    <location>
        <position position="171"/>
    </location>
    <ligand>
        <name>phosphoenolpyruvate</name>
        <dbReference type="ChEBI" id="CHEBI:58702"/>
    </ligand>
</feature>
<feature type="binding site" evidence="1">
    <location>
        <position position="195"/>
    </location>
    <ligand>
        <name>3-phosphoshikimate</name>
        <dbReference type="ChEBI" id="CHEBI:145989"/>
    </ligand>
</feature>
<feature type="binding site" evidence="1">
    <location>
        <position position="318"/>
    </location>
    <ligand>
        <name>3-phosphoshikimate</name>
        <dbReference type="ChEBI" id="CHEBI:145989"/>
    </ligand>
</feature>
<feature type="binding site" evidence="1">
    <location>
        <position position="345"/>
    </location>
    <ligand>
        <name>3-phosphoshikimate</name>
        <dbReference type="ChEBI" id="CHEBI:145989"/>
    </ligand>
</feature>
<feature type="binding site" evidence="1">
    <location>
        <position position="349"/>
    </location>
    <ligand>
        <name>phosphoenolpyruvate</name>
        <dbReference type="ChEBI" id="CHEBI:58702"/>
    </ligand>
</feature>
<feature type="binding site" evidence="1">
    <location>
        <position position="393"/>
    </location>
    <ligand>
        <name>phosphoenolpyruvate</name>
        <dbReference type="ChEBI" id="CHEBI:58702"/>
    </ligand>
</feature>
<organism>
    <name type="scientific">Pelodictyon phaeoclathratiforme (strain DSM 5477 / BU-1)</name>
    <dbReference type="NCBI Taxonomy" id="324925"/>
    <lineage>
        <taxon>Bacteria</taxon>
        <taxon>Pseudomonadati</taxon>
        <taxon>Chlorobiota</taxon>
        <taxon>Chlorobiia</taxon>
        <taxon>Chlorobiales</taxon>
        <taxon>Chlorobiaceae</taxon>
        <taxon>Chlorobium/Pelodictyon group</taxon>
        <taxon>Pelodictyon</taxon>
    </lineage>
</organism>
<evidence type="ECO:0000255" key="1">
    <source>
        <dbReference type="HAMAP-Rule" id="MF_00210"/>
    </source>
</evidence>
<keyword id="KW-0028">Amino-acid biosynthesis</keyword>
<keyword id="KW-0057">Aromatic amino acid biosynthesis</keyword>
<keyword id="KW-0963">Cytoplasm</keyword>
<keyword id="KW-1185">Reference proteome</keyword>
<keyword id="KW-0808">Transferase</keyword>
<proteinExistence type="inferred from homology"/>
<accession>B4SFD3</accession>
<protein>
    <recommendedName>
        <fullName evidence="1">3-phosphoshikimate 1-carboxyvinyltransferase</fullName>
        <ecNumber evidence="1">2.5.1.19</ecNumber>
    </recommendedName>
    <alternativeName>
        <fullName evidence="1">5-enolpyruvylshikimate-3-phosphate synthase</fullName>
        <shortName evidence="1">EPSP synthase</shortName>
        <shortName evidence="1">EPSPS</shortName>
    </alternativeName>
</protein>